<proteinExistence type="inferred from homology"/>
<gene>
    <name evidence="1" type="primary">thiM1</name>
    <name type="ordered locus">SPT_0733</name>
</gene>
<evidence type="ECO:0000255" key="1">
    <source>
        <dbReference type="HAMAP-Rule" id="MF_00228"/>
    </source>
</evidence>
<organism>
    <name type="scientific">Streptococcus pneumoniae (strain Taiwan19F-14)</name>
    <dbReference type="NCBI Taxonomy" id="487213"/>
    <lineage>
        <taxon>Bacteria</taxon>
        <taxon>Bacillati</taxon>
        <taxon>Bacillota</taxon>
        <taxon>Bacilli</taxon>
        <taxon>Lactobacillales</taxon>
        <taxon>Streptococcaceae</taxon>
        <taxon>Streptococcus</taxon>
    </lineage>
</organism>
<name>THIM1_STRZT</name>
<keyword id="KW-0067">ATP-binding</keyword>
<keyword id="KW-0418">Kinase</keyword>
<keyword id="KW-0460">Magnesium</keyword>
<keyword id="KW-0479">Metal-binding</keyword>
<keyword id="KW-0547">Nucleotide-binding</keyword>
<keyword id="KW-0784">Thiamine biosynthesis</keyword>
<keyword id="KW-0808">Transferase</keyword>
<comment type="function">
    <text evidence="1">Catalyzes the phosphorylation of the hydroxyl group of 4-methyl-5-beta-hydroxyethylthiazole (THZ).</text>
</comment>
<comment type="catalytic activity">
    <reaction evidence="1">
        <text>5-(2-hydroxyethyl)-4-methylthiazole + ATP = 4-methyl-5-(2-phosphooxyethyl)-thiazole + ADP + H(+)</text>
        <dbReference type="Rhea" id="RHEA:24212"/>
        <dbReference type="ChEBI" id="CHEBI:15378"/>
        <dbReference type="ChEBI" id="CHEBI:17957"/>
        <dbReference type="ChEBI" id="CHEBI:30616"/>
        <dbReference type="ChEBI" id="CHEBI:58296"/>
        <dbReference type="ChEBI" id="CHEBI:456216"/>
        <dbReference type="EC" id="2.7.1.50"/>
    </reaction>
</comment>
<comment type="cofactor">
    <cofactor evidence="1">
        <name>Mg(2+)</name>
        <dbReference type="ChEBI" id="CHEBI:18420"/>
    </cofactor>
</comment>
<comment type="pathway">
    <text evidence="1">Cofactor biosynthesis; thiamine diphosphate biosynthesis; 4-methyl-5-(2-phosphoethyl)-thiazole from 5-(2-hydroxyethyl)-4-methylthiazole: step 1/1.</text>
</comment>
<comment type="similarity">
    <text evidence="1">Belongs to the Thz kinase family.</text>
</comment>
<reference key="1">
    <citation type="journal article" date="2010" name="Genome Biol.">
        <title>Structure and dynamics of the pan-genome of Streptococcus pneumoniae and closely related species.</title>
        <authorList>
            <person name="Donati C."/>
            <person name="Hiller N.L."/>
            <person name="Tettelin H."/>
            <person name="Muzzi A."/>
            <person name="Croucher N.J."/>
            <person name="Angiuoli S.V."/>
            <person name="Oggioni M."/>
            <person name="Dunning Hotopp J.C."/>
            <person name="Hu F.Z."/>
            <person name="Riley D.R."/>
            <person name="Covacci A."/>
            <person name="Mitchell T.J."/>
            <person name="Bentley S.D."/>
            <person name="Kilian M."/>
            <person name="Ehrlich G.D."/>
            <person name="Rappuoli R."/>
            <person name="Moxon E.R."/>
            <person name="Masignani V."/>
        </authorList>
    </citation>
    <scope>NUCLEOTIDE SEQUENCE [LARGE SCALE GENOMIC DNA]</scope>
    <source>
        <strain>Taiwan19F-14</strain>
    </source>
</reference>
<feature type="chain" id="PRO_1000198134" description="Hydroxyethylthiazole kinase 1">
    <location>
        <begin position="1"/>
        <end position="260"/>
    </location>
</feature>
<feature type="binding site" evidence="1">
    <location>
        <position position="39"/>
    </location>
    <ligand>
        <name>substrate</name>
    </ligand>
</feature>
<feature type="binding site" evidence="1">
    <location>
        <position position="115"/>
    </location>
    <ligand>
        <name>ATP</name>
        <dbReference type="ChEBI" id="CHEBI:30616"/>
    </ligand>
</feature>
<feature type="binding site" evidence="1">
    <location>
        <position position="160"/>
    </location>
    <ligand>
        <name>ATP</name>
        <dbReference type="ChEBI" id="CHEBI:30616"/>
    </ligand>
</feature>
<feature type="binding site" evidence="1">
    <location>
        <position position="187"/>
    </location>
    <ligand>
        <name>substrate</name>
    </ligand>
</feature>
<protein>
    <recommendedName>
        <fullName evidence="1">Hydroxyethylthiazole kinase 1</fullName>
        <ecNumber evidence="1">2.7.1.50</ecNumber>
    </recommendedName>
    <alternativeName>
        <fullName evidence="1">4-methyl-5-beta-hydroxyethylthiazole kinase 1</fullName>
        <shortName evidence="1">TH kinase 1</shortName>
        <shortName evidence="1">Thz kinase 1</shortName>
    </alternativeName>
</protein>
<accession>C1CQI2</accession>
<sequence length="260" mass="27561">MTSLKLLKEKAPLVICITNDVVKNFTANGLVALGASPAMSEFPADLEDLLKYAGGLLINIGTLTDENWKLYQAALKIAEKYNVPAVLDPVACGAGEYRKKVADDLINNYKLAAIRGNAGEIASLVGIDVASKGVDSAGVDNIDEIALAANEKFNIPIVVTGEVDAIAVNGEVVTIHNGSAMMPKVIGTGCLLGAVVASFIGLEKGQELKSLETAMLVYNIAGEIAEKRPNGHLPGTFKAEFINALYEITDEDVKEFKRVK</sequence>
<dbReference type="EC" id="2.7.1.50" evidence="1"/>
<dbReference type="EMBL" id="CP000921">
    <property type="protein sequence ID" value="ACO22303.1"/>
    <property type="molecule type" value="Genomic_DNA"/>
</dbReference>
<dbReference type="SMR" id="C1CQI2"/>
<dbReference type="KEGG" id="snt:SPT_0733"/>
<dbReference type="HOGENOM" id="CLU_019943_0_2_9"/>
<dbReference type="UniPathway" id="UPA00060">
    <property type="reaction ID" value="UER00139"/>
</dbReference>
<dbReference type="GO" id="GO:0005524">
    <property type="term" value="F:ATP binding"/>
    <property type="evidence" value="ECO:0007669"/>
    <property type="project" value="UniProtKB-UniRule"/>
</dbReference>
<dbReference type="GO" id="GO:0004417">
    <property type="term" value="F:hydroxyethylthiazole kinase activity"/>
    <property type="evidence" value="ECO:0007669"/>
    <property type="project" value="UniProtKB-UniRule"/>
</dbReference>
<dbReference type="GO" id="GO:0000287">
    <property type="term" value="F:magnesium ion binding"/>
    <property type="evidence" value="ECO:0007669"/>
    <property type="project" value="UniProtKB-UniRule"/>
</dbReference>
<dbReference type="GO" id="GO:0009228">
    <property type="term" value="P:thiamine biosynthetic process"/>
    <property type="evidence" value="ECO:0007669"/>
    <property type="project" value="UniProtKB-KW"/>
</dbReference>
<dbReference type="GO" id="GO:0009229">
    <property type="term" value="P:thiamine diphosphate biosynthetic process"/>
    <property type="evidence" value="ECO:0007669"/>
    <property type="project" value="UniProtKB-UniRule"/>
</dbReference>
<dbReference type="CDD" id="cd01170">
    <property type="entry name" value="THZ_kinase"/>
    <property type="match status" value="1"/>
</dbReference>
<dbReference type="Gene3D" id="3.40.1190.20">
    <property type="match status" value="1"/>
</dbReference>
<dbReference type="HAMAP" id="MF_00228">
    <property type="entry name" value="Thz_kinase"/>
    <property type="match status" value="1"/>
</dbReference>
<dbReference type="InterPro" id="IPR000417">
    <property type="entry name" value="Hyethyz_kinase"/>
</dbReference>
<dbReference type="InterPro" id="IPR029056">
    <property type="entry name" value="Ribokinase-like"/>
</dbReference>
<dbReference type="NCBIfam" id="NF006830">
    <property type="entry name" value="PRK09355.1"/>
    <property type="match status" value="1"/>
</dbReference>
<dbReference type="NCBIfam" id="TIGR00694">
    <property type="entry name" value="thiM"/>
    <property type="match status" value="1"/>
</dbReference>
<dbReference type="Pfam" id="PF02110">
    <property type="entry name" value="HK"/>
    <property type="match status" value="1"/>
</dbReference>
<dbReference type="PIRSF" id="PIRSF000513">
    <property type="entry name" value="Thz_kinase"/>
    <property type="match status" value="1"/>
</dbReference>
<dbReference type="PRINTS" id="PR01099">
    <property type="entry name" value="HYETHTZKNASE"/>
</dbReference>
<dbReference type="SUPFAM" id="SSF53613">
    <property type="entry name" value="Ribokinase-like"/>
    <property type="match status" value="1"/>
</dbReference>